<sequence>MNSSSLLTPSSSPSPHLQSPATFDHDDFLHHIFSSTPWPSSVLDDTPPPTSDCAPVTGFHHHDADSRNQITMIPLSHNHPNDALFNGFSTGSLPFHLPQGSGGQTQTQSQATASATTGGATAQPQTKPKVRARRGQATDPHSIAERLRRERIAERMKSLQELVPNGNKTDKASMLDEIIDYVKFLQLQVKVLSMSRLGGAASASSQISEDAGGSHENTSSSGEAKMTEHQVAKLMEEDMGSAMQYLQGKGLCLMPISLATTISTATCPSRSPFVKDTGVPLSPNLSTTIVANGNGSSLVTVKDAPSVSKP</sequence>
<dbReference type="EMBL" id="AF488601">
    <property type="protein sequence ID" value="AAM10956.1"/>
    <property type="molecule type" value="mRNA"/>
</dbReference>
<dbReference type="EMBL" id="AB493711">
    <property type="protein sequence ID" value="BAH30549.1"/>
    <property type="molecule type" value="mRNA"/>
</dbReference>
<dbReference type="EMBL" id="AL022198">
    <property type="protein sequence ID" value="CAA18195.1"/>
    <property type="status" value="ALT_SEQ"/>
    <property type="molecule type" value="Genomic_DNA"/>
</dbReference>
<dbReference type="EMBL" id="AL161578">
    <property type="protein sequence ID" value="CAB79816.1"/>
    <property type="status" value="ALT_SEQ"/>
    <property type="molecule type" value="Genomic_DNA"/>
</dbReference>
<dbReference type="EMBL" id="CP002687">
    <property type="protein sequence ID" value="AEE85837.1"/>
    <property type="molecule type" value="Genomic_DNA"/>
</dbReference>
<dbReference type="PIR" id="G85362">
    <property type="entry name" value="G85362"/>
</dbReference>
<dbReference type="RefSeq" id="NP_001320095.1">
    <property type="nucleotide sequence ID" value="NM_001342047.1"/>
</dbReference>
<dbReference type="SMR" id="Q8S3D5"/>
<dbReference type="BioGRID" id="14510">
    <property type="interactions" value="13"/>
</dbReference>
<dbReference type="FunCoup" id="Q8S3D5">
    <property type="interactions" value="405"/>
</dbReference>
<dbReference type="IntAct" id="Q8S3D5">
    <property type="interactions" value="13"/>
</dbReference>
<dbReference type="STRING" id="3702.Q8S3D5"/>
<dbReference type="PaxDb" id="3702-AT4G30980.1"/>
<dbReference type="EnsemblPlants" id="AT4G30980.1">
    <property type="protein sequence ID" value="AT4G30980.1"/>
    <property type="gene ID" value="AT4G30980"/>
</dbReference>
<dbReference type="GeneID" id="829223"/>
<dbReference type="Gramene" id="AT4G30980.1">
    <property type="protein sequence ID" value="AT4G30980.1"/>
    <property type="gene ID" value="AT4G30980"/>
</dbReference>
<dbReference type="KEGG" id="ath:AT4G30980"/>
<dbReference type="Araport" id="AT4G30980"/>
<dbReference type="TAIR" id="AT4G30980">
    <property type="gene designation" value="LRL2"/>
</dbReference>
<dbReference type="eggNOG" id="ENOG502QQDT">
    <property type="taxonomic scope" value="Eukaryota"/>
</dbReference>
<dbReference type="HOGENOM" id="CLU_044273_0_1_1"/>
<dbReference type="InParanoid" id="Q8S3D5"/>
<dbReference type="PhylomeDB" id="Q8S3D5"/>
<dbReference type="PRO" id="PR:Q8S3D5"/>
<dbReference type="Proteomes" id="UP000006548">
    <property type="component" value="Chromosome 4"/>
</dbReference>
<dbReference type="ExpressionAtlas" id="Q8S3D5">
    <property type="expression patterns" value="baseline and differential"/>
</dbReference>
<dbReference type="GO" id="GO:0005634">
    <property type="term" value="C:nucleus"/>
    <property type="evidence" value="ECO:0007669"/>
    <property type="project" value="UniProtKB-SubCell"/>
</dbReference>
<dbReference type="GO" id="GO:0003677">
    <property type="term" value="F:DNA binding"/>
    <property type="evidence" value="ECO:0007669"/>
    <property type="project" value="UniProtKB-KW"/>
</dbReference>
<dbReference type="GO" id="GO:0003700">
    <property type="term" value="F:DNA-binding transcription factor activity"/>
    <property type="evidence" value="ECO:0000250"/>
    <property type="project" value="TAIR"/>
</dbReference>
<dbReference type="GO" id="GO:0046983">
    <property type="term" value="F:protein dimerization activity"/>
    <property type="evidence" value="ECO:0007669"/>
    <property type="project" value="InterPro"/>
</dbReference>
<dbReference type="GO" id="GO:0055046">
    <property type="term" value="P:microgametogenesis"/>
    <property type="evidence" value="ECO:0000316"/>
    <property type="project" value="TAIR"/>
</dbReference>
<dbReference type="GO" id="GO:0048235">
    <property type="term" value="P:pollen sperm cell differentiation"/>
    <property type="evidence" value="ECO:0000316"/>
    <property type="project" value="TAIR"/>
</dbReference>
<dbReference type="GO" id="GO:0006355">
    <property type="term" value="P:regulation of DNA-templated transcription"/>
    <property type="evidence" value="ECO:0000304"/>
    <property type="project" value="TAIR"/>
</dbReference>
<dbReference type="GO" id="GO:0080147">
    <property type="term" value="P:root hair cell development"/>
    <property type="evidence" value="ECO:0000315"/>
    <property type="project" value="TAIR"/>
</dbReference>
<dbReference type="GO" id="GO:0048765">
    <property type="term" value="P:root hair cell differentiation"/>
    <property type="evidence" value="ECO:0000315"/>
    <property type="project" value="TAIR"/>
</dbReference>
<dbReference type="GO" id="GO:0048767">
    <property type="term" value="P:root hair elongation"/>
    <property type="evidence" value="ECO:0000316"/>
    <property type="project" value="TAIR"/>
</dbReference>
<dbReference type="FunFam" id="4.10.280.10:FF:000017">
    <property type="entry name" value="Transcription factor bHLH66"/>
    <property type="match status" value="1"/>
</dbReference>
<dbReference type="Gene3D" id="4.10.280.10">
    <property type="entry name" value="Helix-loop-helix DNA-binding domain"/>
    <property type="match status" value="1"/>
</dbReference>
<dbReference type="InterPro" id="IPR011598">
    <property type="entry name" value="bHLH_dom"/>
</dbReference>
<dbReference type="InterPro" id="IPR036638">
    <property type="entry name" value="HLH_DNA-bd_sf"/>
</dbReference>
<dbReference type="InterPro" id="IPR045843">
    <property type="entry name" value="IND-like"/>
</dbReference>
<dbReference type="PANTHER" id="PTHR16223">
    <property type="entry name" value="TRANSCRIPTION FACTOR BHLH83-RELATED"/>
    <property type="match status" value="1"/>
</dbReference>
<dbReference type="PANTHER" id="PTHR16223:SF348">
    <property type="entry name" value="TRANSCRIPTION FACTOR LRL2"/>
    <property type="match status" value="1"/>
</dbReference>
<dbReference type="Pfam" id="PF00010">
    <property type="entry name" value="HLH"/>
    <property type="match status" value="1"/>
</dbReference>
<dbReference type="SMART" id="SM00353">
    <property type="entry name" value="HLH"/>
    <property type="match status" value="1"/>
</dbReference>
<dbReference type="SUPFAM" id="SSF47459">
    <property type="entry name" value="HLH, helix-loop-helix DNA-binding domain"/>
    <property type="match status" value="1"/>
</dbReference>
<dbReference type="PROSITE" id="PS50888">
    <property type="entry name" value="BHLH"/>
    <property type="match status" value="1"/>
</dbReference>
<protein>
    <recommendedName>
        <fullName evidence="9">Transcription factor LRL2</fullName>
    </recommendedName>
    <alternativeName>
        <fullName evidence="6">Basic helix-loop-helix protein 69</fullName>
        <shortName evidence="6">AtbHLH69</shortName>
        <shortName evidence="6">bHLH 69</shortName>
    </alternativeName>
    <alternativeName>
        <fullName evidence="8">Protein DEFECTIVE REGION OF POLLEN 2</fullName>
    </alternativeName>
    <alternativeName>
        <fullName evidence="7">Protein LJRHL1- LIKE 2</fullName>
        <shortName evidence="7">AtLRL2</shortName>
    </alternativeName>
    <alternativeName>
        <fullName evidence="9">Transcription factor EN 94</fullName>
    </alternativeName>
    <alternativeName>
        <fullName evidence="9">Transcription factor bHLH69</fullName>
    </alternativeName>
    <alternativeName>
        <fullName evidence="6">bHLH transcription factor bHLH069</fullName>
    </alternativeName>
</protein>
<evidence type="ECO:0000255" key="1">
    <source>
        <dbReference type="PROSITE-ProRule" id="PRU00981"/>
    </source>
</evidence>
<evidence type="ECO:0000256" key="2">
    <source>
        <dbReference type="SAM" id="MobiDB-lite"/>
    </source>
</evidence>
<evidence type="ECO:0000269" key="3">
    <source>
    </source>
</evidence>
<evidence type="ECO:0000269" key="4">
    <source>
    </source>
</evidence>
<evidence type="ECO:0000269" key="5">
    <source>
    </source>
</evidence>
<evidence type="ECO:0000303" key="6">
    <source>
    </source>
</evidence>
<evidence type="ECO:0000303" key="7">
    <source>
    </source>
</evidence>
<evidence type="ECO:0000303" key="8">
    <source>
    </source>
</evidence>
<evidence type="ECO:0000305" key="9"/>
<evidence type="ECO:0000312" key="10">
    <source>
        <dbReference type="Araport" id="AT4G30980"/>
    </source>
</evidence>
<evidence type="ECO:0000312" key="11">
    <source>
        <dbReference type="EMBL" id="CAA18195.1"/>
    </source>
</evidence>
<keyword id="KW-0238">DNA-binding</keyword>
<keyword id="KW-0539">Nucleus</keyword>
<keyword id="KW-1185">Reference proteome</keyword>
<keyword id="KW-0804">Transcription</keyword>
<keyword id="KW-0805">Transcription regulation</keyword>
<reference key="1">
    <citation type="journal article" date="2003" name="Mol. Biol. Evol.">
        <title>The basic helix-loop-helix transcription factor family in plants: a genome-wide study of protein structure and functional diversity.</title>
        <authorList>
            <person name="Heim M.A."/>
            <person name="Jakoby M."/>
            <person name="Werber M."/>
            <person name="Martin C."/>
            <person name="Weisshaar B."/>
            <person name="Bailey P.C."/>
        </authorList>
    </citation>
    <scope>NUCLEOTIDE SEQUENCE [MRNA]</scope>
    <scope>TISSUE SPECIFICITY</scope>
    <scope>INDUCTION</scope>
    <scope>GENE FAMILY</scope>
    <scope>NOMENCLATURE</scope>
    <source>
        <strain>cv. Columbia</strain>
        <tissue>Flower</tissue>
    </source>
</reference>
<reference key="2">
    <citation type="submission" date="2009-03" db="EMBL/GenBank/DDBJ databases">
        <title>ORF cloning and analysis of Arabidopsis transcription factor genes.</title>
        <authorList>
            <person name="Fujita M."/>
        </authorList>
    </citation>
    <scope>NUCLEOTIDE SEQUENCE [MRNA]</scope>
</reference>
<reference key="3">
    <citation type="journal article" date="1999" name="Nature">
        <title>Sequence and analysis of chromosome 4 of the plant Arabidopsis thaliana.</title>
        <authorList>
            <person name="Mayer K.F.X."/>
            <person name="Schueller C."/>
            <person name="Wambutt R."/>
            <person name="Murphy G."/>
            <person name="Volckaert G."/>
            <person name="Pohl T."/>
            <person name="Duesterhoeft A."/>
            <person name="Stiekema W."/>
            <person name="Entian K.-D."/>
            <person name="Terryn N."/>
            <person name="Harris B."/>
            <person name="Ansorge W."/>
            <person name="Brandt P."/>
            <person name="Grivell L.A."/>
            <person name="Rieger M."/>
            <person name="Weichselgartner M."/>
            <person name="de Simone V."/>
            <person name="Obermaier B."/>
            <person name="Mache R."/>
            <person name="Mueller M."/>
            <person name="Kreis M."/>
            <person name="Delseny M."/>
            <person name="Puigdomenech P."/>
            <person name="Watson M."/>
            <person name="Schmidtheini T."/>
            <person name="Reichert B."/>
            <person name="Portetelle D."/>
            <person name="Perez-Alonso M."/>
            <person name="Boutry M."/>
            <person name="Bancroft I."/>
            <person name="Vos P."/>
            <person name="Hoheisel J."/>
            <person name="Zimmermann W."/>
            <person name="Wedler H."/>
            <person name="Ridley P."/>
            <person name="Langham S.-A."/>
            <person name="McCullagh B."/>
            <person name="Bilham L."/>
            <person name="Robben J."/>
            <person name="van der Schueren J."/>
            <person name="Grymonprez B."/>
            <person name="Chuang Y.-J."/>
            <person name="Vandenbussche F."/>
            <person name="Braeken M."/>
            <person name="Weltjens I."/>
            <person name="Voet M."/>
            <person name="Bastiaens I."/>
            <person name="Aert R."/>
            <person name="Defoor E."/>
            <person name="Weitzenegger T."/>
            <person name="Bothe G."/>
            <person name="Ramsperger U."/>
            <person name="Hilbert H."/>
            <person name="Braun M."/>
            <person name="Holzer E."/>
            <person name="Brandt A."/>
            <person name="Peters S."/>
            <person name="van Staveren M."/>
            <person name="Dirkse W."/>
            <person name="Mooijman P."/>
            <person name="Klein Lankhorst R."/>
            <person name="Rose M."/>
            <person name="Hauf J."/>
            <person name="Koetter P."/>
            <person name="Berneiser S."/>
            <person name="Hempel S."/>
            <person name="Feldpausch M."/>
            <person name="Lamberth S."/>
            <person name="Van den Daele H."/>
            <person name="De Keyser A."/>
            <person name="Buysshaert C."/>
            <person name="Gielen J."/>
            <person name="Villarroel R."/>
            <person name="De Clercq R."/>
            <person name="van Montagu M."/>
            <person name="Rogers J."/>
            <person name="Cronin A."/>
            <person name="Quail M.A."/>
            <person name="Bray-Allen S."/>
            <person name="Clark L."/>
            <person name="Doggett J."/>
            <person name="Hall S."/>
            <person name="Kay M."/>
            <person name="Lennard N."/>
            <person name="McLay K."/>
            <person name="Mayes R."/>
            <person name="Pettett A."/>
            <person name="Rajandream M.A."/>
            <person name="Lyne M."/>
            <person name="Benes V."/>
            <person name="Rechmann S."/>
            <person name="Borkova D."/>
            <person name="Bloecker H."/>
            <person name="Scharfe M."/>
            <person name="Grimm M."/>
            <person name="Loehnert T.-H."/>
            <person name="Dose S."/>
            <person name="de Haan M."/>
            <person name="Maarse A.C."/>
            <person name="Schaefer M."/>
            <person name="Mueller-Auer S."/>
            <person name="Gabel C."/>
            <person name="Fuchs M."/>
            <person name="Fartmann B."/>
            <person name="Granderath K."/>
            <person name="Dauner D."/>
            <person name="Herzl A."/>
            <person name="Neumann S."/>
            <person name="Argiriou A."/>
            <person name="Vitale D."/>
            <person name="Liguori R."/>
            <person name="Piravandi E."/>
            <person name="Massenet O."/>
            <person name="Quigley F."/>
            <person name="Clabauld G."/>
            <person name="Muendlein A."/>
            <person name="Felber R."/>
            <person name="Schnabl S."/>
            <person name="Hiller R."/>
            <person name="Schmidt W."/>
            <person name="Lecharny A."/>
            <person name="Aubourg S."/>
            <person name="Chefdor F."/>
            <person name="Cooke R."/>
            <person name="Berger C."/>
            <person name="Monfort A."/>
            <person name="Casacuberta E."/>
            <person name="Gibbons T."/>
            <person name="Weber N."/>
            <person name="Vandenbol M."/>
            <person name="Bargues M."/>
            <person name="Terol J."/>
            <person name="Torres A."/>
            <person name="Perez-Perez A."/>
            <person name="Purnelle B."/>
            <person name="Bent E."/>
            <person name="Johnson S."/>
            <person name="Tacon D."/>
            <person name="Jesse T."/>
            <person name="Heijnen L."/>
            <person name="Schwarz S."/>
            <person name="Scholler P."/>
            <person name="Heber S."/>
            <person name="Francs P."/>
            <person name="Bielke C."/>
            <person name="Frishman D."/>
            <person name="Haase D."/>
            <person name="Lemcke K."/>
            <person name="Mewes H.-W."/>
            <person name="Stocker S."/>
            <person name="Zaccaria P."/>
            <person name="Bevan M."/>
            <person name="Wilson R.K."/>
            <person name="de la Bastide M."/>
            <person name="Habermann K."/>
            <person name="Parnell L."/>
            <person name="Dedhia N."/>
            <person name="Gnoj L."/>
            <person name="Schutz K."/>
            <person name="Huang E."/>
            <person name="Spiegel L."/>
            <person name="Sekhon M."/>
            <person name="Murray J."/>
            <person name="Sheet P."/>
            <person name="Cordes M."/>
            <person name="Abu-Threideh J."/>
            <person name="Stoneking T."/>
            <person name="Kalicki J."/>
            <person name="Graves T."/>
            <person name="Harmon G."/>
            <person name="Edwards J."/>
            <person name="Latreille P."/>
            <person name="Courtney L."/>
            <person name="Cloud J."/>
            <person name="Abbott A."/>
            <person name="Scott K."/>
            <person name="Johnson D."/>
            <person name="Minx P."/>
            <person name="Bentley D."/>
            <person name="Fulton B."/>
            <person name="Miller N."/>
            <person name="Greco T."/>
            <person name="Kemp K."/>
            <person name="Kramer J."/>
            <person name="Fulton L."/>
            <person name="Mardis E."/>
            <person name="Dante M."/>
            <person name="Pepin K."/>
            <person name="Hillier L.W."/>
            <person name="Nelson J."/>
            <person name="Spieth J."/>
            <person name="Ryan E."/>
            <person name="Andrews S."/>
            <person name="Geisel C."/>
            <person name="Layman D."/>
            <person name="Du H."/>
            <person name="Ali J."/>
            <person name="Berghoff A."/>
            <person name="Jones K."/>
            <person name="Drone K."/>
            <person name="Cotton M."/>
            <person name="Joshu C."/>
            <person name="Antonoiu B."/>
            <person name="Zidanic M."/>
            <person name="Strong C."/>
            <person name="Sun H."/>
            <person name="Lamar B."/>
            <person name="Yordan C."/>
            <person name="Ma P."/>
            <person name="Zhong J."/>
            <person name="Preston R."/>
            <person name="Vil D."/>
            <person name="Shekher M."/>
            <person name="Matero A."/>
            <person name="Shah R."/>
            <person name="Swaby I.K."/>
            <person name="O'Shaughnessy A."/>
            <person name="Rodriguez M."/>
            <person name="Hoffman J."/>
            <person name="Till S."/>
            <person name="Granat S."/>
            <person name="Shohdy N."/>
            <person name="Hasegawa A."/>
            <person name="Hameed A."/>
            <person name="Lodhi M."/>
            <person name="Johnson A."/>
            <person name="Chen E."/>
            <person name="Marra M.A."/>
            <person name="Martienssen R."/>
            <person name="McCombie W.R."/>
        </authorList>
    </citation>
    <scope>NUCLEOTIDE SEQUENCE [LARGE SCALE GENOMIC DNA]</scope>
    <source>
        <strain>cv. Columbia</strain>
    </source>
</reference>
<reference key="4">
    <citation type="journal article" date="2017" name="Plant J.">
        <title>Araport11: a complete reannotation of the Arabidopsis thaliana reference genome.</title>
        <authorList>
            <person name="Cheng C.Y."/>
            <person name="Krishnakumar V."/>
            <person name="Chan A.P."/>
            <person name="Thibaud-Nissen F."/>
            <person name="Schobel S."/>
            <person name="Town C.D."/>
        </authorList>
    </citation>
    <scope>GENOME REANNOTATION</scope>
    <source>
        <strain>cv. Columbia</strain>
    </source>
</reference>
<reference key="5">
    <citation type="journal article" date="2003" name="Plant Cell">
        <title>The Arabidopsis basic/helix-loop-helix transcription factor family.</title>
        <authorList>
            <person name="Toledo-Ortiz G."/>
            <person name="Huq E."/>
            <person name="Quail P.H."/>
        </authorList>
    </citation>
    <scope>GENE FAMILY</scope>
</reference>
<reference key="6">
    <citation type="journal article" date="2003" name="Plant Cell">
        <title>Update on the basic helix-loop-helix transcription factor gene family in Arabidopsis thaliana.</title>
        <authorList>
            <person name="Bailey P.C."/>
            <person name="Martin C."/>
            <person name="Toledo-Ortiz G."/>
            <person name="Quail P.H."/>
            <person name="Huq E."/>
            <person name="Heim M.A."/>
            <person name="Jakoby M."/>
            <person name="Werber M."/>
            <person name="Weisshaar B."/>
        </authorList>
    </citation>
    <scope>GENE FAMILY</scope>
    <scope>NOMENCLATURE</scope>
</reference>
<reference key="7">
    <citation type="journal article" date="2009" name="Plant Physiol.">
        <title>Conservation of lotus and Arabidopsis basic helix-loop-helix proteins reveals new players in root hair development.</title>
        <authorList>
            <person name="Karas B."/>
            <person name="Amyot L."/>
            <person name="Johansen C."/>
            <person name="Sato S."/>
            <person name="Tabata S."/>
            <person name="Kawaguchi M."/>
            <person name="Szczyglowski K."/>
        </authorList>
    </citation>
    <scope>FUNCTION</scope>
    <scope>DISRUPTION PHENOTYPE</scope>
</reference>
<reference key="8">
    <citation type="journal article" date="2017" name="Nat. Plants">
        <title>Sperm cells are passive cargo of the pollen tube in plant fertilization.</title>
        <authorList>
            <person name="Zhang J."/>
            <person name="Huang Q."/>
            <person name="Zhong S."/>
            <person name="Bleckmann A."/>
            <person name="Huang J."/>
            <person name="Guo X."/>
            <person name="Lin Q."/>
            <person name="Gu H."/>
            <person name="Dong J."/>
            <person name="Dresselhaus T."/>
            <person name="Qu L.J."/>
        </authorList>
    </citation>
    <scope>FUNCTION</scope>
    <scope>DISRUPTION PHENOTYPE</scope>
</reference>
<proteinExistence type="evidence at transcript level"/>
<gene>
    <name evidence="7" type="primary">LRL2</name>
    <name evidence="6" type="synonym">BHLH69</name>
    <name evidence="8" type="synonym">DROP2</name>
    <name type="synonym">EN94</name>
    <name evidence="10" type="ordered locus">At4g30980</name>
    <name evidence="11" type="ORF">F6I18.110</name>
</gene>
<organism>
    <name type="scientific">Arabidopsis thaliana</name>
    <name type="common">Mouse-ear cress</name>
    <dbReference type="NCBI Taxonomy" id="3702"/>
    <lineage>
        <taxon>Eukaryota</taxon>
        <taxon>Viridiplantae</taxon>
        <taxon>Streptophyta</taxon>
        <taxon>Embryophyta</taxon>
        <taxon>Tracheophyta</taxon>
        <taxon>Spermatophyta</taxon>
        <taxon>Magnoliopsida</taxon>
        <taxon>eudicotyledons</taxon>
        <taxon>Gunneridae</taxon>
        <taxon>Pentapetalae</taxon>
        <taxon>rosids</taxon>
        <taxon>malvids</taxon>
        <taxon>Brassicales</taxon>
        <taxon>Brassicaceae</taxon>
        <taxon>Camelineae</taxon>
        <taxon>Arabidopsis</taxon>
    </lineage>
</organism>
<name>LRL2_ARATH</name>
<comment type="function">
    <text evidence="4 5">Transcription factor that regulates the development of root hairs (PubMed:19675148). Transcription factor that regulates the development of sperm cells (PubMed:28585562).</text>
</comment>
<comment type="subunit">
    <text evidence="9">Homodimer.</text>
</comment>
<comment type="subcellular location">
    <subcellularLocation>
        <location evidence="1">Nucleus</location>
    </subcellularLocation>
</comment>
<comment type="tissue specificity">
    <text evidence="3">Expressed constitutively in roots, leaves, stems, and flowers.</text>
</comment>
<comment type="induction">
    <text evidence="3">Repressed by heat treatment.</text>
</comment>
<comment type="disruption phenotype">
    <text evidence="4 5">No visible phenotype under normal growth conditions (PubMed:19675148, PubMed:28585562). The triple mutant lrl1, lrl2 and lrl3 exhibit very short root hairs (PubMed:19675148). The double mutant drop1 and drop2 fail to develop sperm cells (PubMed:28585562).</text>
</comment>
<comment type="sequence caution" evidence="9">
    <conflict type="erroneous gene model prediction">
        <sequence resource="EMBL-CDS" id="CAA18195"/>
    </conflict>
</comment>
<comment type="sequence caution" evidence="9">
    <conflict type="erroneous gene model prediction">
        <sequence resource="EMBL-CDS" id="CAB79816"/>
    </conflict>
</comment>
<feature type="chain" id="PRO_0000358763" description="Transcription factor LRL2">
    <location>
        <begin position="1"/>
        <end position="310"/>
    </location>
</feature>
<feature type="domain" description="bHLH" evidence="1">
    <location>
        <begin position="136"/>
        <end position="185"/>
    </location>
</feature>
<feature type="region of interest" description="Disordered" evidence="2">
    <location>
        <begin position="1"/>
        <end position="23"/>
    </location>
</feature>
<feature type="region of interest" description="Disordered" evidence="2">
    <location>
        <begin position="95"/>
        <end position="143"/>
    </location>
</feature>
<feature type="region of interest" description="Basic motif; degenerate" evidence="1">
    <location>
        <begin position="136"/>
        <end position="149"/>
    </location>
</feature>
<feature type="region of interest" description="Helix-loop-helix motif" evidence="1">
    <location>
        <begin position="150"/>
        <end position="185"/>
    </location>
</feature>
<feature type="region of interest" description="Disordered" evidence="2">
    <location>
        <begin position="203"/>
        <end position="225"/>
    </location>
</feature>
<feature type="compositionally biased region" description="Low complexity" evidence="2">
    <location>
        <begin position="1"/>
        <end position="20"/>
    </location>
</feature>
<feature type="compositionally biased region" description="Low complexity" evidence="2">
    <location>
        <begin position="104"/>
        <end position="126"/>
    </location>
</feature>
<accession>Q8S3D5</accession>
<accession>A0A178UUJ2</accession>
<accession>C0SVK8</accession>
<accession>O65552</accession>